<name>LFY_ARATH</name>
<reference key="1">
    <citation type="journal article" date="1992" name="Cell">
        <title>LEAFY controls floral meristem identity in Arabidopsis.</title>
        <authorList>
            <person name="Weigel D."/>
            <person name="Alvarez J."/>
            <person name="Smyth D.R."/>
            <person name="Yanofsky M.F."/>
            <person name="Meyerowitz E.M."/>
        </authorList>
    </citation>
    <scope>NUCLEOTIDE SEQUENCE [GENOMIC DNA]</scope>
</reference>
<reference key="2">
    <citation type="journal article" date="2002" name="Genetics">
        <title>Contrasting evolutionary forces in the Arabidopsis thaliana floral developmental pathway.</title>
        <authorList>
            <person name="Olsen K.M."/>
            <person name="Womack A."/>
            <person name="Garrett A.R."/>
            <person name="Suddith J.I."/>
            <person name="Purugganan M.D."/>
        </authorList>
    </citation>
    <scope>NUCLEOTIDE SEQUENCE [GENOMIC DNA]</scope>
    <scope>VARIANTS</scope>
    <source>
        <strain>cv. Bla-1</strain>
        <strain>cv. Bretagny</strain>
        <strain>cv. Bs-1</strain>
        <strain>cv. Bu-0</strain>
        <strain>cv. Bu-2</strain>
        <strain>cv. Chi-1</strain>
        <strain>cv. Co-1</strain>
        <strain>cv. Columbia</strain>
        <strain>cv. Cvi-0</strain>
        <strain>cv. Gr-3</strain>
        <strain>cv. Ita-0</strain>
        <strain>cv. Jl-1</strain>
        <strain>cv. Kas-1</strain>
        <strain>cv. Kent</strain>
        <strain>cv. Landsberg erecta</strain>
        <strain>cv. Li-3</strain>
        <strain>cv. Li-8</strain>
        <strain>cv. Lisse</strain>
        <strain>cv. Wassilewskija</strain>
    </source>
</reference>
<reference key="3">
    <citation type="journal article" date="1998" name="DNA Res.">
        <title>Structural analysis of Arabidopsis thaliana chromosome 5. IV. Sequence features of the regions of 1,456,315 bp covered by nineteen physically assigned P1 and TAC clones.</title>
        <authorList>
            <person name="Sato S."/>
            <person name="Kaneko T."/>
            <person name="Kotani H."/>
            <person name="Nakamura Y."/>
            <person name="Asamizu E."/>
            <person name="Miyajima N."/>
            <person name="Tabata S."/>
        </authorList>
    </citation>
    <scope>NUCLEOTIDE SEQUENCE [LARGE SCALE GENOMIC DNA]</scope>
    <source>
        <strain>cv. Columbia</strain>
    </source>
</reference>
<reference key="4">
    <citation type="journal article" date="2017" name="Plant J.">
        <title>Araport11: a complete reannotation of the Arabidopsis thaliana reference genome.</title>
        <authorList>
            <person name="Cheng C.Y."/>
            <person name="Krishnakumar V."/>
            <person name="Chan A.P."/>
            <person name="Thibaud-Nissen F."/>
            <person name="Schobel S."/>
            <person name="Town C.D."/>
        </authorList>
    </citation>
    <scope>GENOME REANNOTATION</scope>
    <source>
        <strain>cv. Columbia</strain>
    </source>
</reference>
<reference key="5">
    <citation type="journal article" date="2006" name="Plant Biotechnol. J.">
        <title>Simultaneous high-throughput recombinational cloning of open reading frames in closed and open configurations.</title>
        <authorList>
            <person name="Underwood B.A."/>
            <person name="Vanderhaeghen R."/>
            <person name="Whitford R."/>
            <person name="Town C.D."/>
            <person name="Hilson P."/>
        </authorList>
    </citation>
    <scope>NUCLEOTIDE SEQUENCE [LARGE SCALE MRNA]</scope>
    <source>
        <strain>cv. Columbia</strain>
    </source>
</reference>
<reference key="6">
    <citation type="journal article" date="1993" name="Development">
        <title>Control of flower development in Arabidopsis thaliana by APETALA1 and interacting genes.</title>
        <authorList>
            <person name="Bowman J.L."/>
            <person name="Alvarez J."/>
            <person name="Weigel D."/>
            <person name="Meyerowitz E.M."/>
            <person name="Smyth D.R."/>
        </authorList>
    </citation>
    <scope>FUNCTION</scope>
</reference>
<reference key="7">
    <citation type="journal article" date="1996" name="Development">
        <title>The Arabidopsis homeotic genes APETALA3 and PISTILLATA are sufficient to provide the B class organ identity function.</title>
        <authorList>
            <person name="Krizek B.A."/>
            <person name="Meyerowitz E.M."/>
        </authorList>
    </citation>
    <scope>FUNCTION</scope>
</reference>
<reference key="8">
    <citation type="journal article" date="1998" name="Nature">
        <title>A genetic framework for floral patterning.</title>
        <authorList>
            <person name="Parcy F."/>
            <person name="Nilsson O."/>
            <person name="Busch M.A."/>
            <person name="Lee I."/>
            <person name="Weigel D."/>
        </authorList>
    </citation>
    <scope>FUNCTION</scope>
</reference>
<reference key="9">
    <citation type="journal article" date="2012" name="Proc. Natl. Acad. Sci. U.S.A.">
        <title>SWI2/SNF2 chromatin remodeling ATPases overcome polycomb repression and control floral organ identity with the LEAFY and SEPALLATA3 transcription factors.</title>
        <authorList>
            <person name="Wu M.F."/>
            <person name="Sang Y."/>
            <person name="Bezhani S."/>
            <person name="Yamaguchi N."/>
            <person name="Han S.K."/>
            <person name="Li Z."/>
            <person name="Su Y."/>
            <person name="Slewinski T.L."/>
            <person name="Wagner D."/>
        </authorList>
    </citation>
    <scope>INTERACTION WITH SYD AND BRM</scope>
</reference>
<reference key="10">
    <citation type="journal article" date="2008" name="EMBO J.">
        <title>Structural basis for LEAFY floral switch function and similarity with helix-turn-helix proteins.</title>
        <authorList>
            <person name="Hames C."/>
            <person name="Ptchelkine D."/>
            <person name="Grimm C."/>
            <person name="Thevenon E."/>
            <person name="Moyroud E."/>
            <person name="Gerard F."/>
            <person name="Martiel J.L."/>
            <person name="Benlloch R."/>
            <person name="Parcy F."/>
            <person name="Mueller C.W."/>
        </authorList>
    </citation>
    <scope>X-RAY CRYSTALLOGRAPHY (2.10 ANGSTROMS) OF 227-420 IN COMPLEX WITH DNA</scope>
    <scope>SUBUNIT</scope>
    <scope>MUTAGENESIS OF ARG-233; GLU-234; PRO-236; THR-240; ASN-287; ASN-302; LYS-303; PRO-304 AND ARG-327</scope>
    <source>
        <strain>cv. Landsberg erecta</strain>
    </source>
</reference>
<accession>Q00958</accession>
<accession>A0MFR2</accession>
<accession>Q1PDG5</accession>
<accession>Q8LSH2</accession>
<accession>Q8LSH3</accession>
<proteinExistence type="evidence at protein level"/>
<gene>
    <name type="primary">LFY</name>
    <name type="ordered locus">At5g61850</name>
    <name type="ORF">MAC9.18</name>
</gene>
<comment type="function">
    <text evidence="6 7 8">Probable transcription factor that promotes early floral meristem identity in synergy with APETALA1. Is required subsequently for the transition of an inflorescence meristem into a floral meristem, by an immediate upstream regulation of the ABC classes of floral homeotic genes. Activates directly APETALA1, CAULIFLOWER and AGAMOUS, and indirectly APETALA3 and PISTILLATA with the cooperation of UFO.</text>
</comment>
<comment type="subunit">
    <text evidence="4 5">Forms homodimer when associated to DNA. Interacts with SYD and BRM.</text>
</comment>
<comment type="interaction">
    <interactant intactId="EBI-1644366">
        <id>Q00958</id>
    </interactant>
    <interactant intactId="EBI-2025535">
        <id>Q6EVK6</id>
        <label>BRM</label>
    </interactant>
    <organismsDiffer>false</organismsDiffer>
    <experiments>3</experiments>
</comment>
<comment type="interaction">
    <interactant intactId="EBI-1644366">
        <id>Q00958</id>
    </interactant>
    <interactant intactId="EBI-15967899">
        <id>F4IHS2</id>
        <label>SYD</label>
    </interactant>
    <organismsDiffer>false</organismsDiffer>
    <experiments>4</experiments>
</comment>
<comment type="interaction">
    <interactant intactId="EBI-1644366">
        <id>Q00958</id>
    </interactant>
    <interactant intactId="EBI-590758">
        <id>Q39090</id>
        <label>UFO</label>
    </interactant>
    <organismsDiffer>false</organismsDiffer>
    <experiments>6</experiments>
</comment>
<comment type="subcellular location">
    <subcellularLocation>
        <location evidence="2">Nucleus</location>
    </subcellularLocation>
</comment>
<comment type="tissue specificity">
    <text>Expressed uniformly throughout the young floral primordia.</text>
</comment>
<comment type="developmental stage">
    <text>Expressed at an early stage of floral initiation.</text>
</comment>
<comment type="induction">
    <text>Positively regulated by CAULIFLOWER and APETALA1. Down-regulated by TFL1.</text>
</comment>
<comment type="miscellaneous">
    <text>Mutations in the LEAFY gene result in the complete transformation of the first few flowers into leaves with associated shoots.</text>
</comment>
<comment type="similarity">
    <text evidence="9">Belongs to the FLO/LFY family.</text>
</comment>
<comment type="sequence caution" evidence="9">
    <conflict type="erroneous gene model prediction">
        <sequence resource="EMBL-CDS" id="AAA32826"/>
    </conflict>
</comment>
<comment type="sequence caution" evidence="9">
    <conflict type="erroneous gene model prediction">
        <sequence resource="EMBL-CDS" id="AAM27927"/>
    </conflict>
</comment>
<comment type="sequence caution" evidence="9">
    <conflict type="erroneous gene model prediction">
        <sequence resource="EMBL-CDS" id="AAM27928"/>
    </conflict>
</comment>
<comment type="sequence caution" evidence="9">
    <conflict type="erroneous gene model prediction">
        <sequence resource="EMBL-CDS" id="AAM27929"/>
    </conflict>
</comment>
<comment type="sequence caution" evidence="9">
    <conflict type="erroneous gene model prediction">
        <sequence resource="EMBL-CDS" id="AAM27930"/>
    </conflict>
</comment>
<comment type="sequence caution" evidence="9">
    <conflict type="erroneous gene model prediction">
        <sequence resource="EMBL-CDS" id="AAM27931"/>
    </conflict>
</comment>
<comment type="sequence caution" evidence="9">
    <conflict type="erroneous gene model prediction">
        <sequence resource="EMBL-CDS" id="AAM27932"/>
    </conflict>
</comment>
<comment type="sequence caution" evidence="9">
    <conflict type="erroneous gene model prediction">
        <sequence resource="EMBL-CDS" id="AAM27933"/>
    </conflict>
</comment>
<comment type="sequence caution" evidence="9">
    <conflict type="erroneous gene model prediction">
        <sequence resource="EMBL-CDS" id="AAM27934"/>
    </conflict>
</comment>
<comment type="sequence caution" evidence="9">
    <conflict type="erroneous gene model prediction">
        <sequence resource="EMBL-CDS" id="AAM27935"/>
    </conflict>
</comment>
<comment type="sequence caution" evidence="9">
    <conflict type="erroneous gene model prediction">
        <sequence resource="EMBL-CDS" id="AAM27936"/>
    </conflict>
</comment>
<comment type="sequence caution" evidence="9">
    <conflict type="erroneous gene model prediction">
        <sequence resource="EMBL-CDS" id="AAM27937"/>
    </conflict>
</comment>
<comment type="sequence caution" evidence="9">
    <conflict type="erroneous gene model prediction">
        <sequence resource="EMBL-CDS" id="AAM27938"/>
    </conflict>
</comment>
<comment type="sequence caution" evidence="9">
    <conflict type="erroneous gene model prediction">
        <sequence resource="EMBL-CDS" id="AAM27939"/>
    </conflict>
</comment>
<comment type="sequence caution" evidence="9">
    <conflict type="erroneous gene model prediction">
        <sequence resource="EMBL-CDS" id="AAM27940"/>
    </conflict>
</comment>
<comment type="sequence caution" evidence="9">
    <conflict type="erroneous gene model prediction">
        <sequence resource="EMBL-CDS" id="AAM27941"/>
    </conflict>
</comment>
<comment type="sequence caution" evidence="9">
    <conflict type="erroneous termination">
        <sequence resource="EMBL-CDS" id="ABK28773"/>
    </conflict>
    <text>Extended C-terminus.</text>
</comment>
<comment type="sequence caution" evidence="9">
    <conflict type="erroneous gene model prediction">
        <sequence resource="EMBL-CDS" id="BAB10085"/>
    </conflict>
</comment>
<protein>
    <recommendedName>
        <fullName>Protein LEAFY</fullName>
    </recommendedName>
</protein>
<sequence length="420" mass="46582">MDPEGFTSGLFRWNPTRALVQAPPPVPPPLQQQPVTPQTAAFGMRLGGLEGLFGPYGIRFYTAAKIAELGFTASTLVGMKDEELEEMMNSLSHIFRWELLVGERYGIKAAVRAERRRLQEEEEEESSRRRHLLLSAAGDSGTHHALDALSQEGLSEEPVQQQDQTDAAGNNGGGGSGYWDAGQGKMKKQQQQRRRKKPMLTSVETDEDVNEGEDDDGMDNGNGGSGLGTERQREHPFIVTEPGEVARGKKNGLDYLFHLYEQCREFLLQVQTIAKDRGEKCPTKVTNQVFRYAKKSGASYINKPKMRHYVHCYALHCLDEEASNALRRAFKERGENVGSWRQACYKPLVNIACRHGWDIDAVFNAHPRLSIWYVPTKLRQLCHLERNNAVAAAAALVGGISCTGSSTSGRGGCGGDDLRF</sequence>
<organism>
    <name type="scientific">Arabidopsis thaliana</name>
    <name type="common">Mouse-ear cress</name>
    <dbReference type="NCBI Taxonomy" id="3702"/>
    <lineage>
        <taxon>Eukaryota</taxon>
        <taxon>Viridiplantae</taxon>
        <taxon>Streptophyta</taxon>
        <taxon>Embryophyta</taxon>
        <taxon>Tracheophyta</taxon>
        <taxon>Spermatophyta</taxon>
        <taxon>Magnoliopsida</taxon>
        <taxon>eudicotyledons</taxon>
        <taxon>Gunneridae</taxon>
        <taxon>Pentapetalae</taxon>
        <taxon>rosids</taxon>
        <taxon>malvids</taxon>
        <taxon>Brassicales</taxon>
        <taxon>Brassicaceae</taxon>
        <taxon>Camelineae</taxon>
        <taxon>Arabidopsis</taxon>
    </lineage>
</organism>
<keyword id="KW-0002">3D-structure</keyword>
<keyword id="KW-0010">Activator</keyword>
<keyword id="KW-0175">Coiled coil</keyword>
<keyword id="KW-0217">Developmental protein</keyword>
<keyword id="KW-0221">Differentiation</keyword>
<keyword id="KW-0238">DNA-binding</keyword>
<keyword id="KW-0287">Flowering</keyword>
<keyword id="KW-0539">Nucleus</keyword>
<keyword id="KW-1185">Reference proteome</keyword>
<keyword id="KW-0804">Transcription</keyword>
<keyword id="KW-0805">Transcription regulation</keyword>
<dbReference type="EMBL" id="M91208">
    <property type="protein sequence ID" value="AAA32826.1"/>
    <property type="status" value="ALT_SEQ"/>
    <property type="molecule type" value="Genomic_DNA"/>
</dbReference>
<dbReference type="EMBL" id="AF466787">
    <property type="protein sequence ID" value="AAM27927.1"/>
    <property type="status" value="ALT_SEQ"/>
    <property type="molecule type" value="Genomic_DNA"/>
</dbReference>
<dbReference type="EMBL" id="AF466788">
    <property type="protein sequence ID" value="AAM27928.1"/>
    <property type="status" value="ALT_SEQ"/>
    <property type="molecule type" value="Genomic_DNA"/>
</dbReference>
<dbReference type="EMBL" id="AF466789">
    <property type="protein sequence ID" value="AAM27929.1"/>
    <property type="status" value="ALT_SEQ"/>
    <property type="molecule type" value="Genomic_DNA"/>
</dbReference>
<dbReference type="EMBL" id="AF466790">
    <property type="protein sequence ID" value="AAM27930.1"/>
    <property type="status" value="ALT_SEQ"/>
    <property type="molecule type" value="Genomic_DNA"/>
</dbReference>
<dbReference type="EMBL" id="AF466791">
    <property type="protein sequence ID" value="AAM27931.1"/>
    <property type="status" value="ALT_SEQ"/>
    <property type="molecule type" value="Genomic_DNA"/>
</dbReference>
<dbReference type="EMBL" id="AF466792">
    <property type="protein sequence ID" value="AAM27932.1"/>
    <property type="status" value="ALT_SEQ"/>
    <property type="molecule type" value="Genomic_DNA"/>
</dbReference>
<dbReference type="EMBL" id="AF466793">
    <property type="protein sequence ID" value="AAM27933.1"/>
    <property type="status" value="ALT_SEQ"/>
    <property type="molecule type" value="Genomic_DNA"/>
</dbReference>
<dbReference type="EMBL" id="AF466794">
    <property type="protein sequence ID" value="AAM27934.1"/>
    <property type="status" value="ALT_SEQ"/>
    <property type="molecule type" value="Genomic_DNA"/>
</dbReference>
<dbReference type="EMBL" id="AF466795">
    <property type="protein sequence ID" value="AAM27935.1"/>
    <property type="status" value="ALT_SEQ"/>
    <property type="molecule type" value="Genomic_DNA"/>
</dbReference>
<dbReference type="EMBL" id="AF466796">
    <property type="protein sequence ID" value="AAM27936.1"/>
    <property type="status" value="ALT_SEQ"/>
    <property type="molecule type" value="Genomic_DNA"/>
</dbReference>
<dbReference type="EMBL" id="AF466797">
    <property type="protein sequence ID" value="AAM27937.1"/>
    <property type="status" value="ALT_SEQ"/>
    <property type="molecule type" value="Genomic_DNA"/>
</dbReference>
<dbReference type="EMBL" id="AF466798">
    <property type="protein sequence ID" value="AAM27938.1"/>
    <property type="status" value="ALT_SEQ"/>
    <property type="molecule type" value="Genomic_DNA"/>
</dbReference>
<dbReference type="EMBL" id="AF466799">
    <property type="protein sequence ID" value="AAM27939.1"/>
    <property type="status" value="ALT_SEQ"/>
    <property type="molecule type" value="Genomic_DNA"/>
</dbReference>
<dbReference type="EMBL" id="AF466800">
    <property type="protein sequence ID" value="AAM27940.1"/>
    <property type="status" value="ALT_SEQ"/>
    <property type="molecule type" value="Genomic_DNA"/>
</dbReference>
<dbReference type="EMBL" id="AF466801">
    <property type="protein sequence ID" value="AAM27941.1"/>
    <property type="status" value="ALT_SEQ"/>
    <property type="molecule type" value="Genomic_DNA"/>
</dbReference>
<dbReference type="EMBL" id="AB010069">
    <property type="protein sequence ID" value="BAB10085.1"/>
    <property type="status" value="ALT_SEQ"/>
    <property type="molecule type" value="Genomic_DNA"/>
</dbReference>
<dbReference type="EMBL" id="CP002688">
    <property type="protein sequence ID" value="AED97525.1"/>
    <property type="molecule type" value="Genomic_DNA"/>
</dbReference>
<dbReference type="EMBL" id="DQ447103">
    <property type="protein sequence ID" value="ABE66271.1"/>
    <property type="molecule type" value="mRNA"/>
</dbReference>
<dbReference type="EMBL" id="DQ653389">
    <property type="protein sequence ID" value="ABK28773.1"/>
    <property type="status" value="ALT_SEQ"/>
    <property type="molecule type" value="mRNA"/>
</dbReference>
<dbReference type="PIR" id="A38104">
    <property type="entry name" value="A38104"/>
</dbReference>
<dbReference type="PIR" id="B38104">
    <property type="entry name" value="B38104"/>
</dbReference>
<dbReference type="PIR" id="C38104">
    <property type="entry name" value="C38104"/>
</dbReference>
<dbReference type="RefSeq" id="NP_001331273.1">
    <property type="nucleotide sequence ID" value="NM_001345500.1"/>
</dbReference>
<dbReference type="RefSeq" id="NP_200993.1">
    <property type="nucleotide sequence ID" value="NM_125579.1"/>
</dbReference>
<dbReference type="PDB" id="2VY1">
    <property type="method" value="X-ray"/>
    <property type="resolution" value="2.10 A"/>
    <property type="chains" value="A=227-420"/>
</dbReference>
<dbReference type="PDB" id="2VY2">
    <property type="method" value="X-ray"/>
    <property type="resolution" value="2.30 A"/>
    <property type="chains" value="A=227-420"/>
</dbReference>
<dbReference type="PDBsum" id="2VY1"/>
<dbReference type="PDBsum" id="2VY2"/>
<dbReference type="SMR" id="Q00958"/>
<dbReference type="BioGRID" id="21551">
    <property type="interactions" value="5"/>
</dbReference>
<dbReference type="DIP" id="DIP-40341N"/>
<dbReference type="FunCoup" id="Q00958">
    <property type="interactions" value="4"/>
</dbReference>
<dbReference type="IntAct" id="Q00958">
    <property type="interactions" value="3"/>
</dbReference>
<dbReference type="STRING" id="3702.Q00958"/>
<dbReference type="GlyGen" id="Q00958">
    <property type="glycosylation" value="1 site"/>
</dbReference>
<dbReference type="iPTMnet" id="Q00958"/>
<dbReference type="PaxDb" id="3702-AT5G61850.1"/>
<dbReference type="EnsemblPlants" id="AT5G61850.1">
    <property type="protein sequence ID" value="AT5G61850.1"/>
    <property type="gene ID" value="AT5G61850"/>
</dbReference>
<dbReference type="GeneID" id="836307"/>
<dbReference type="Gramene" id="AT5G61850.1">
    <property type="protein sequence ID" value="AT5G61850.1"/>
    <property type="gene ID" value="AT5G61850"/>
</dbReference>
<dbReference type="KEGG" id="ath:AT5G61850"/>
<dbReference type="Araport" id="AT5G61850"/>
<dbReference type="TAIR" id="AT5G61850">
    <property type="gene designation" value="LFY"/>
</dbReference>
<dbReference type="eggNOG" id="ENOG502QSDD">
    <property type="taxonomic scope" value="Eukaryota"/>
</dbReference>
<dbReference type="HOGENOM" id="CLU_060646_0_0_1"/>
<dbReference type="InParanoid" id="Q00958"/>
<dbReference type="OrthoDB" id="1875842at2759"/>
<dbReference type="PhylomeDB" id="Q00958"/>
<dbReference type="EvolutionaryTrace" id="Q00958"/>
<dbReference type="PRO" id="PR:Q00958"/>
<dbReference type="Proteomes" id="UP000006548">
    <property type="component" value="Chromosome 5"/>
</dbReference>
<dbReference type="ExpressionAtlas" id="Q00958">
    <property type="expression patterns" value="baseline and differential"/>
</dbReference>
<dbReference type="GO" id="GO:0005634">
    <property type="term" value="C:nucleus"/>
    <property type="evidence" value="ECO:0000304"/>
    <property type="project" value="TAIR"/>
</dbReference>
<dbReference type="GO" id="GO:0031490">
    <property type="term" value="F:chromatin DNA binding"/>
    <property type="evidence" value="ECO:0000314"/>
    <property type="project" value="TAIR"/>
</dbReference>
<dbReference type="GO" id="GO:0003700">
    <property type="term" value="F:DNA-binding transcription factor activity"/>
    <property type="evidence" value="ECO:0000314"/>
    <property type="project" value="TAIR"/>
</dbReference>
<dbReference type="GO" id="GO:0042803">
    <property type="term" value="F:protein homodimerization activity"/>
    <property type="evidence" value="ECO:0000314"/>
    <property type="project" value="UniProtKB"/>
</dbReference>
<dbReference type="GO" id="GO:0043565">
    <property type="term" value="F:sequence-specific DNA binding"/>
    <property type="evidence" value="ECO:0000314"/>
    <property type="project" value="TAIR"/>
</dbReference>
<dbReference type="GO" id="GO:0000976">
    <property type="term" value="F:transcription cis-regulatory region binding"/>
    <property type="evidence" value="ECO:0000353"/>
    <property type="project" value="TAIR"/>
</dbReference>
<dbReference type="GO" id="GO:0030154">
    <property type="term" value="P:cell differentiation"/>
    <property type="evidence" value="ECO:0007669"/>
    <property type="project" value="UniProtKB-KW"/>
</dbReference>
<dbReference type="GO" id="GO:0010582">
    <property type="term" value="P:floral meristem determinacy"/>
    <property type="evidence" value="ECO:0000316"/>
    <property type="project" value="TAIR"/>
</dbReference>
<dbReference type="GO" id="GO:0009908">
    <property type="term" value="P:flower development"/>
    <property type="evidence" value="ECO:0000315"/>
    <property type="project" value="TAIR"/>
</dbReference>
<dbReference type="GO" id="GO:0009740">
    <property type="term" value="P:gibberellic acid mediated signaling pathway"/>
    <property type="evidence" value="ECO:0000304"/>
    <property type="project" value="TAIR"/>
</dbReference>
<dbReference type="GO" id="GO:0010077">
    <property type="term" value="P:maintenance of inflorescence meristem identity"/>
    <property type="evidence" value="ECO:0000316"/>
    <property type="project" value="TAIR"/>
</dbReference>
<dbReference type="FunFam" id="1.10.4180.10:FF:000001">
    <property type="entry name" value="Transcription factor floricaula/leafy"/>
    <property type="match status" value="1"/>
</dbReference>
<dbReference type="Gene3D" id="1.10.4180.10">
    <property type="entry name" value="Protein LEAFY"/>
    <property type="match status" value="1"/>
</dbReference>
<dbReference type="InterPro" id="IPR035209">
    <property type="entry name" value="FLO/LFY_C"/>
</dbReference>
<dbReference type="InterPro" id="IPR002910">
    <property type="entry name" value="FLO_LFY"/>
</dbReference>
<dbReference type="InterPro" id="IPR038276">
    <property type="entry name" value="Floricaula/leafy_C_sf"/>
</dbReference>
<dbReference type="InterPro" id="IPR035079">
    <property type="entry name" value="LFY_SAM"/>
</dbReference>
<dbReference type="PANTHER" id="PTHR36079">
    <property type="entry name" value="PROTEIN LEAFY"/>
    <property type="match status" value="1"/>
</dbReference>
<dbReference type="PANTHER" id="PTHR36079:SF1">
    <property type="entry name" value="PROTEIN LEAFY"/>
    <property type="match status" value="1"/>
</dbReference>
<dbReference type="Pfam" id="PF17538">
    <property type="entry name" value="C_LFY_FLO"/>
    <property type="match status" value="1"/>
</dbReference>
<dbReference type="Pfam" id="PF01698">
    <property type="entry name" value="SAM_LFY"/>
    <property type="match status" value="1"/>
</dbReference>
<evidence type="ECO:0000255" key="1"/>
<evidence type="ECO:0000255" key="2">
    <source>
        <dbReference type="PROSITE-ProRule" id="PRU00768"/>
    </source>
</evidence>
<evidence type="ECO:0000256" key="3">
    <source>
        <dbReference type="SAM" id="MobiDB-lite"/>
    </source>
</evidence>
<evidence type="ECO:0000269" key="4">
    <source>
    </source>
</evidence>
<evidence type="ECO:0000269" key="5">
    <source>
    </source>
</evidence>
<evidence type="ECO:0000269" key="6">
    <source>
    </source>
</evidence>
<evidence type="ECO:0000269" key="7">
    <source>
    </source>
</evidence>
<evidence type="ECO:0000269" key="8">
    <source ref="6"/>
</evidence>
<evidence type="ECO:0000305" key="9"/>
<evidence type="ECO:0007744" key="10">
    <source>
        <dbReference type="PDB" id="2VY1"/>
    </source>
</evidence>
<evidence type="ECO:0007744" key="11">
    <source>
        <dbReference type="PDB" id="2VY2"/>
    </source>
</evidence>
<evidence type="ECO:0007829" key="12">
    <source>
        <dbReference type="PDB" id="2VY1"/>
    </source>
</evidence>
<feature type="chain" id="PRO_0000129147" description="Protein LEAFY">
    <location>
        <begin position="1"/>
        <end position="420"/>
    </location>
</feature>
<feature type="DNA-binding region" evidence="4 10 11">
    <location>
        <begin position="233"/>
        <end position="237"/>
    </location>
</feature>
<feature type="DNA-binding region" evidence="4 10 11">
    <location>
        <begin position="302"/>
        <end position="309"/>
    </location>
</feature>
<feature type="DNA-binding region" evidence="4 10 11">
    <location>
        <begin position="373"/>
        <end position="376"/>
    </location>
</feature>
<feature type="region of interest" description="Disordered" evidence="3">
    <location>
        <begin position="153"/>
        <end position="231"/>
    </location>
</feature>
<feature type="coiled-coil region" evidence="1">
    <location>
        <begin position="108"/>
        <end position="133"/>
    </location>
</feature>
<feature type="short sequence motif" description="Nuclear localization signal" evidence="2">
    <location>
        <begin position="115"/>
        <end position="122"/>
    </location>
</feature>
<feature type="compositionally biased region" description="Basic residues" evidence="3">
    <location>
        <begin position="185"/>
        <end position="198"/>
    </location>
</feature>
<feature type="compositionally biased region" description="Acidic residues" evidence="3">
    <location>
        <begin position="204"/>
        <end position="218"/>
    </location>
</feature>
<feature type="site" description="Interaction with DNA" evidence="4 10 11">
    <location>
        <position position="280"/>
    </location>
</feature>
<feature type="site" description="Interaction with DNA" evidence="4 10 11">
    <location>
        <position position="287"/>
    </location>
</feature>
<feature type="site" description="Interaction with DNA" evidence="4 10 11">
    <location>
        <position position="291"/>
    </location>
</feature>
<feature type="site" description="Interaction with DNA" evidence="4 10 11">
    <location>
        <position position="338"/>
    </location>
</feature>
<feature type="sequence variant" description="In strain: cv. Jl-1.">
    <original>S</original>
    <variation>R</variation>
    <location>
        <position position="8"/>
    </location>
</feature>
<feature type="sequence variant" description="In strain: cv. Ita-0.">
    <original>G</original>
    <variation>D</variation>
    <location>
        <position position="78"/>
    </location>
</feature>
<feature type="mutagenesis site" description="Impaired DNA-binding." evidence="4">
    <original>R</original>
    <variation>A</variation>
    <location>
        <position position="233"/>
    </location>
</feature>
<feature type="mutagenesis site" description="In lfy-4; decreased in vitro DNA-binding affinities and leafy phenotype." evidence="4">
    <original>E</original>
    <variation>K</variation>
    <location>
        <position position="234"/>
    </location>
</feature>
<feature type="mutagenesis site" description="In lfy-5; decreased in vitro DNA-binding affinities and leafy phenotype." evidence="4">
    <original>P</original>
    <variation>L</variation>
    <location>
        <position position="236"/>
    </location>
</feature>
<feature type="mutagenesis site" description="In lfy-3; leafy phenotype." evidence="4">
    <original>T</original>
    <variation>M</variation>
    <location>
        <position position="240"/>
    </location>
</feature>
<feature type="mutagenesis site" description="Impaired DNA-binding." evidence="4">
    <original>N</original>
    <variation>A</variation>
    <location>
        <position position="287"/>
    </location>
</feature>
<feature type="mutagenesis site" description="In lfy-20; reduced DNA-binding affinity with a weak leafy phenotype." evidence="4">
    <original>N</original>
    <variation>D</variation>
    <location>
        <position position="302"/>
    </location>
</feature>
<feature type="mutagenesis site" description="Impaired DNA-binding." evidence="4">
    <original>K</original>
    <variation>A</variation>
    <location>
        <position position="303"/>
    </location>
</feature>
<feature type="mutagenesis site" description="In lfy-28; impaired DNA-binding and strong leafy phenotype." evidence="4">
    <original>P</original>
    <variation>L</variation>
    <location>
        <position position="304"/>
    </location>
</feature>
<feature type="mutagenesis site" description="In lfy-9; leafy phenotype." evidence="4">
    <original>R</original>
    <variation>K</variation>
    <location>
        <position position="327"/>
    </location>
</feature>
<feature type="helix" evidence="12">
    <location>
        <begin position="253"/>
        <end position="276"/>
    </location>
</feature>
<feature type="helix" evidence="12">
    <location>
        <begin position="287"/>
        <end position="295"/>
    </location>
</feature>
<feature type="helix" evidence="12">
    <location>
        <begin position="303"/>
        <end position="308"/>
    </location>
</feature>
<feature type="helix" evidence="12">
    <location>
        <begin position="310"/>
        <end position="318"/>
    </location>
</feature>
<feature type="helix" evidence="12">
    <location>
        <begin position="320"/>
        <end position="332"/>
    </location>
</feature>
<feature type="helix" evidence="12">
    <location>
        <begin position="337"/>
        <end position="343"/>
    </location>
</feature>
<feature type="helix" evidence="12">
    <location>
        <begin position="345"/>
        <end position="353"/>
    </location>
</feature>
<feature type="turn" evidence="12">
    <location>
        <begin position="354"/>
        <end position="357"/>
    </location>
</feature>
<feature type="helix" evidence="12">
    <location>
        <begin position="359"/>
        <end position="365"/>
    </location>
</feature>
<feature type="helix" evidence="12">
    <location>
        <begin position="369"/>
        <end position="371"/>
    </location>
</feature>
<feature type="helix" evidence="12">
    <location>
        <begin position="376"/>
        <end position="392"/>
    </location>
</feature>